<organism>
    <name type="scientific">Methylobacterium nodulans (strain LMG 21967 / CNCM I-2342 / ORS 2060)</name>
    <dbReference type="NCBI Taxonomy" id="460265"/>
    <lineage>
        <taxon>Bacteria</taxon>
        <taxon>Pseudomonadati</taxon>
        <taxon>Pseudomonadota</taxon>
        <taxon>Alphaproteobacteria</taxon>
        <taxon>Hyphomicrobiales</taxon>
        <taxon>Methylobacteriaceae</taxon>
        <taxon>Methylobacterium</taxon>
    </lineage>
</organism>
<proteinExistence type="inferred from homology"/>
<sequence length="251" mass="26518">MRSGVIAQKVGMTRVFTDAGEHVPVTVLKVDQCQVVAHRTVEKNGYVALQVGVGKAKVKNVSKAERGRFAIAKVEPKRKLAEFRVSEDALIPVGAEITADHFIPGQFVDVTGITTGKGFAGGMKRWNFGGLRASHGVSISHRSIGSTGGRQDPGKTFKNKKMPGHLGVERVTTQNLRVVRTDPERGLILVEGAVPGVAGGWIHVRDAVKRKLPAEAPMPGKFRELADGAAPAGAVQAAQAAPEAPAAEENA</sequence>
<feature type="chain" id="PRO_1000165894" description="Large ribosomal subunit protein uL3">
    <location>
        <begin position="1"/>
        <end position="251"/>
    </location>
</feature>
<feature type="region of interest" description="Disordered" evidence="2">
    <location>
        <begin position="140"/>
        <end position="162"/>
    </location>
</feature>
<feature type="region of interest" description="Disordered" evidence="2">
    <location>
        <begin position="229"/>
        <end position="251"/>
    </location>
</feature>
<feature type="modified residue" description="N5-methylglutamine" evidence="1">
    <location>
        <position position="151"/>
    </location>
</feature>
<accession>B8IS85</accession>
<dbReference type="EMBL" id="CP001349">
    <property type="protein sequence ID" value="ACL56897.1"/>
    <property type="molecule type" value="Genomic_DNA"/>
</dbReference>
<dbReference type="RefSeq" id="WP_015928586.1">
    <property type="nucleotide sequence ID" value="NC_011894.1"/>
</dbReference>
<dbReference type="SMR" id="B8IS85"/>
<dbReference type="STRING" id="460265.Mnod_1908"/>
<dbReference type="KEGG" id="mno:Mnod_1908"/>
<dbReference type="eggNOG" id="COG0087">
    <property type="taxonomic scope" value="Bacteria"/>
</dbReference>
<dbReference type="HOGENOM" id="CLU_044142_2_0_5"/>
<dbReference type="OrthoDB" id="9806135at2"/>
<dbReference type="Proteomes" id="UP000008207">
    <property type="component" value="Chromosome"/>
</dbReference>
<dbReference type="GO" id="GO:0022625">
    <property type="term" value="C:cytosolic large ribosomal subunit"/>
    <property type="evidence" value="ECO:0007669"/>
    <property type="project" value="TreeGrafter"/>
</dbReference>
<dbReference type="GO" id="GO:0019843">
    <property type="term" value="F:rRNA binding"/>
    <property type="evidence" value="ECO:0007669"/>
    <property type="project" value="UniProtKB-UniRule"/>
</dbReference>
<dbReference type="GO" id="GO:0003735">
    <property type="term" value="F:structural constituent of ribosome"/>
    <property type="evidence" value="ECO:0007669"/>
    <property type="project" value="InterPro"/>
</dbReference>
<dbReference type="GO" id="GO:0006412">
    <property type="term" value="P:translation"/>
    <property type="evidence" value="ECO:0007669"/>
    <property type="project" value="UniProtKB-UniRule"/>
</dbReference>
<dbReference type="FunFam" id="2.40.30.10:FF:000004">
    <property type="entry name" value="50S ribosomal protein L3"/>
    <property type="match status" value="1"/>
</dbReference>
<dbReference type="FunFam" id="3.30.160.810:FF:000001">
    <property type="entry name" value="50S ribosomal protein L3"/>
    <property type="match status" value="1"/>
</dbReference>
<dbReference type="Gene3D" id="3.30.160.810">
    <property type="match status" value="1"/>
</dbReference>
<dbReference type="Gene3D" id="2.40.30.10">
    <property type="entry name" value="Translation factors"/>
    <property type="match status" value="1"/>
</dbReference>
<dbReference type="HAMAP" id="MF_01325_B">
    <property type="entry name" value="Ribosomal_uL3_B"/>
    <property type="match status" value="1"/>
</dbReference>
<dbReference type="InterPro" id="IPR000597">
    <property type="entry name" value="Ribosomal_uL3"/>
</dbReference>
<dbReference type="InterPro" id="IPR019927">
    <property type="entry name" value="Ribosomal_uL3_bac/org-type"/>
</dbReference>
<dbReference type="InterPro" id="IPR019926">
    <property type="entry name" value="Ribosomal_uL3_CS"/>
</dbReference>
<dbReference type="InterPro" id="IPR009000">
    <property type="entry name" value="Transl_B-barrel_sf"/>
</dbReference>
<dbReference type="NCBIfam" id="TIGR03625">
    <property type="entry name" value="L3_bact"/>
    <property type="match status" value="1"/>
</dbReference>
<dbReference type="PANTHER" id="PTHR11229">
    <property type="entry name" value="50S RIBOSOMAL PROTEIN L3"/>
    <property type="match status" value="1"/>
</dbReference>
<dbReference type="PANTHER" id="PTHR11229:SF16">
    <property type="entry name" value="LARGE RIBOSOMAL SUBUNIT PROTEIN UL3C"/>
    <property type="match status" value="1"/>
</dbReference>
<dbReference type="Pfam" id="PF00297">
    <property type="entry name" value="Ribosomal_L3"/>
    <property type="match status" value="1"/>
</dbReference>
<dbReference type="SUPFAM" id="SSF50447">
    <property type="entry name" value="Translation proteins"/>
    <property type="match status" value="1"/>
</dbReference>
<dbReference type="PROSITE" id="PS00474">
    <property type="entry name" value="RIBOSOMAL_L3"/>
    <property type="match status" value="1"/>
</dbReference>
<reference key="1">
    <citation type="submission" date="2009-01" db="EMBL/GenBank/DDBJ databases">
        <title>Complete sequence of chromosome of Methylobacterium nodulans ORS 2060.</title>
        <authorList>
            <consortium name="US DOE Joint Genome Institute"/>
            <person name="Lucas S."/>
            <person name="Copeland A."/>
            <person name="Lapidus A."/>
            <person name="Glavina del Rio T."/>
            <person name="Dalin E."/>
            <person name="Tice H."/>
            <person name="Bruce D."/>
            <person name="Goodwin L."/>
            <person name="Pitluck S."/>
            <person name="Sims D."/>
            <person name="Brettin T."/>
            <person name="Detter J.C."/>
            <person name="Han C."/>
            <person name="Larimer F."/>
            <person name="Land M."/>
            <person name="Hauser L."/>
            <person name="Kyrpides N."/>
            <person name="Ivanova N."/>
            <person name="Marx C.J."/>
            <person name="Richardson P."/>
        </authorList>
    </citation>
    <scope>NUCLEOTIDE SEQUENCE [LARGE SCALE GENOMIC DNA]</scope>
    <source>
        <strain>LMG 21967 / CNCM I-2342 / ORS 2060</strain>
    </source>
</reference>
<comment type="function">
    <text evidence="1">One of the primary rRNA binding proteins, it binds directly near the 3'-end of the 23S rRNA, where it nucleates assembly of the 50S subunit.</text>
</comment>
<comment type="subunit">
    <text evidence="1">Part of the 50S ribosomal subunit. Forms a cluster with proteins L14 and L19.</text>
</comment>
<comment type="PTM">
    <text evidence="1">Methylated by PrmB.</text>
</comment>
<comment type="similarity">
    <text evidence="1">Belongs to the universal ribosomal protein uL3 family.</text>
</comment>
<name>RL3_METNO</name>
<protein>
    <recommendedName>
        <fullName evidence="1">Large ribosomal subunit protein uL3</fullName>
    </recommendedName>
    <alternativeName>
        <fullName evidence="3">50S ribosomal protein L3</fullName>
    </alternativeName>
</protein>
<evidence type="ECO:0000255" key="1">
    <source>
        <dbReference type="HAMAP-Rule" id="MF_01325"/>
    </source>
</evidence>
<evidence type="ECO:0000256" key="2">
    <source>
        <dbReference type="SAM" id="MobiDB-lite"/>
    </source>
</evidence>
<evidence type="ECO:0000305" key="3"/>
<gene>
    <name evidence="1" type="primary">rplC</name>
    <name type="ordered locus">Mnod_1908</name>
</gene>
<keyword id="KW-0488">Methylation</keyword>
<keyword id="KW-1185">Reference proteome</keyword>
<keyword id="KW-0687">Ribonucleoprotein</keyword>
<keyword id="KW-0689">Ribosomal protein</keyword>
<keyword id="KW-0694">RNA-binding</keyword>
<keyword id="KW-0699">rRNA-binding</keyword>